<dbReference type="EC" id="4.2.1.9" evidence="1"/>
<dbReference type="EMBL" id="CP000302">
    <property type="protein sequence ID" value="ABE56687.1"/>
    <property type="molecule type" value="Genomic_DNA"/>
</dbReference>
<dbReference type="RefSeq" id="WP_011497829.1">
    <property type="nucleotide sequence ID" value="NC_007954.1"/>
</dbReference>
<dbReference type="SMR" id="Q12IN9"/>
<dbReference type="STRING" id="318161.Sden_3412"/>
<dbReference type="KEGG" id="sdn:Sden_3412"/>
<dbReference type="eggNOG" id="COG0129">
    <property type="taxonomic scope" value="Bacteria"/>
</dbReference>
<dbReference type="HOGENOM" id="CLU_014271_4_3_6"/>
<dbReference type="OrthoDB" id="9807077at2"/>
<dbReference type="UniPathway" id="UPA00047">
    <property type="reaction ID" value="UER00057"/>
</dbReference>
<dbReference type="UniPathway" id="UPA00049">
    <property type="reaction ID" value="UER00061"/>
</dbReference>
<dbReference type="Proteomes" id="UP000001982">
    <property type="component" value="Chromosome"/>
</dbReference>
<dbReference type="GO" id="GO:0005829">
    <property type="term" value="C:cytosol"/>
    <property type="evidence" value="ECO:0007669"/>
    <property type="project" value="TreeGrafter"/>
</dbReference>
<dbReference type="GO" id="GO:0051537">
    <property type="term" value="F:2 iron, 2 sulfur cluster binding"/>
    <property type="evidence" value="ECO:0007669"/>
    <property type="project" value="UniProtKB-UniRule"/>
</dbReference>
<dbReference type="GO" id="GO:0004160">
    <property type="term" value="F:dihydroxy-acid dehydratase activity"/>
    <property type="evidence" value="ECO:0007669"/>
    <property type="project" value="UniProtKB-UniRule"/>
</dbReference>
<dbReference type="GO" id="GO:0000287">
    <property type="term" value="F:magnesium ion binding"/>
    <property type="evidence" value="ECO:0007669"/>
    <property type="project" value="UniProtKB-UniRule"/>
</dbReference>
<dbReference type="GO" id="GO:0009097">
    <property type="term" value="P:isoleucine biosynthetic process"/>
    <property type="evidence" value="ECO:0007669"/>
    <property type="project" value="UniProtKB-UniRule"/>
</dbReference>
<dbReference type="GO" id="GO:0009099">
    <property type="term" value="P:L-valine biosynthetic process"/>
    <property type="evidence" value="ECO:0007669"/>
    <property type="project" value="UniProtKB-UniRule"/>
</dbReference>
<dbReference type="FunFam" id="3.50.30.80:FF:000001">
    <property type="entry name" value="Dihydroxy-acid dehydratase"/>
    <property type="match status" value="1"/>
</dbReference>
<dbReference type="Gene3D" id="3.50.30.80">
    <property type="entry name" value="IlvD/EDD C-terminal domain-like"/>
    <property type="match status" value="1"/>
</dbReference>
<dbReference type="HAMAP" id="MF_00012">
    <property type="entry name" value="IlvD"/>
    <property type="match status" value="1"/>
</dbReference>
<dbReference type="InterPro" id="IPR042096">
    <property type="entry name" value="Dihydro-acid_dehy_C"/>
</dbReference>
<dbReference type="InterPro" id="IPR004404">
    <property type="entry name" value="DihydroxyA_deHydtase"/>
</dbReference>
<dbReference type="InterPro" id="IPR020558">
    <property type="entry name" value="DiOHA_6PGluconate_deHydtase_CS"/>
</dbReference>
<dbReference type="InterPro" id="IPR056740">
    <property type="entry name" value="ILV_EDD_C"/>
</dbReference>
<dbReference type="InterPro" id="IPR000581">
    <property type="entry name" value="ILV_EDD_N"/>
</dbReference>
<dbReference type="InterPro" id="IPR037237">
    <property type="entry name" value="IlvD/EDD_N"/>
</dbReference>
<dbReference type="NCBIfam" id="TIGR00110">
    <property type="entry name" value="ilvD"/>
    <property type="match status" value="1"/>
</dbReference>
<dbReference type="NCBIfam" id="NF009103">
    <property type="entry name" value="PRK12448.1"/>
    <property type="match status" value="1"/>
</dbReference>
<dbReference type="PANTHER" id="PTHR43661">
    <property type="entry name" value="D-XYLONATE DEHYDRATASE"/>
    <property type="match status" value="1"/>
</dbReference>
<dbReference type="PANTHER" id="PTHR43661:SF3">
    <property type="entry name" value="D-XYLONATE DEHYDRATASE YAGF-RELATED"/>
    <property type="match status" value="1"/>
</dbReference>
<dbReference type="Pfam" id="PF24877">
    <property type="entry name" value="ILV_EDD_C"/>
    <property type="match status" value="1"/>
</dbReference>
<dbReference type="Pfam" id="PF00920">
    <property type="entry name" value="ILVD_EDD_N"/>
    <property type="match status" value="1"/>
</dbReference>
<dbReference type="SUPFAM" id="SSF143975">
    <property type="entry name" value="IlvD/EDD N-terminal domain-like"/>
    <property type="match status" value="1"/>
</dbReference>
<dbReference type="SUPFAM" id="SSF52016">
    <property type="entry name" value="LeuD/IlvD-like"/>
    <property type="match status" value="1"/>
</dbReference>
<dbReference type="PROSITE" id="PS00886">
    <property type="entry name" value="ILVD_EDD_1"/>
    <property type="match status" value="1"/>
</dbReference>
<dbReference type="PROSITE" id="PS00887">
    <property type="entry name" value="ILVD_EDD_2"/>
    <property type="match status" value="1"/>
</dbReference>
<keyword id="KW-0001">2Fe-2S</keyword>
<keyword id="KW-0028">Amino-acid biosynthesis</keyword>
<keyword id="KW-0100">Branched-chain amino acid biosynthesis</keyword>
<keyword id="KW-0408">Iron</keyword>
<keyword id="KW-0411">Iron-sulfur</keyword>
<keyword id="KW-0456">Lyase</keyword>
<keyword id="KW-0460">Magnesium</keyword>
<keyword id="KW-0479">Metal-binding</keyword>
<keyword id="KW-1185">Reference proteome</keyword>
<feature type="chain" id="PRO_1000001052" description="Dihydroxy-acid dehydratase">
    <location>
        <begin position="1"/>
        <end position="619"/>
    </location>
</feature>
<feature type="active site" description="Proton acceptor" evidence="1">
    <location>
        <position position="520"/>
    </location>
</feature>
<feature type="binding site" evidence="1">
    <location>
        <position position="81"/>
    </location>
    <ligand>
        <name>Mg(2+)</name>
        <dbReference type="ChEBI" id="CHEBI:18420"/>
    </ligand>
</feature>
<feature type="binding site" evidence="1">
    <location>
        <position position="122"/>
    </location>
    <ligand>
        <name>[2Fe-2S] cluster</name>
        <dbReference type="ChEBI" id="CHEBI:190135"/>
    </ligand>
</feature>
<feature type="binding site" evidence="1">
    <location>
        <position position="123"/>
    </location>
    <ligand>
        <name>Mg(2+)</name>
        <dbReference type="ChEBI" id="CHEBI:18420"/>
    </ligand>
</feature>
<feature type="binding site" description="via carbamate group" evidence="1">
    <location>
        <position position="124"/>
    </location>
    <ligand>
        <name>Mg(2+)</name>
        <dbReference type="ChEBI" id="CHEBI:18420"/>
    </ligand>
</feature>
<feature type="binding site" evidence="1">
    <location>
        <position position="195"/>
    </location>
    <ligand>
        <name>[2Fe-2S] cluster</name>
        <dbReference type="ChEBI" id="CHEBI:190135"/>
    </ligand>
</feature>
<feature type="binding site" evidence="1">
    <location>
        <position position="494"/>
    </location>
    <ligand>
        <name>Mg(2+)</name>
        <dbReference type="ChEBI" id="CHEBI:18420"/>
    </ligand>
</feature>
<feature type="modified residue" description="N6-carboxylysine" evidence="1">
    <location>
        <position position="124"/>
    </location>
</feature>
<organism>
    <name type="scientific">Shewanella denitrificans (strain OS217 / ATCC BAA-1090 / DSM 15013)</name>
    <dbReference type="NCBI Taxonomy" id="318161"/>
    <lineage>
        <taxon>Bacteria</taxon>
        <taxon>Pseudomonadati</taxon>
        <taxon>Pseudomonadota</taxon>
        <taxon>Gammaproteobacteria</taxon>
        <taxon>Alteromonadales</taxon>
        <taxon>Shewanellaceae</taxon>
        <taxon>Shewanella</taxon>
    </lineage>
</organism>
<comment type="function">
    <text evidence="1">Functions in the biosynthesis of branched-chain amino acids. Catalyzes the dehydration of (2R,3R)-2,3-dihydroxy-3-methylpentanoate (2,3-dihydroxy-3-methylvalerate) into 2-oxo-3-methylpentanoate (2-oxo-3-methylvalerate) and of (2R)-2,3-dihydroxy-3-methylbutanoate (2,3-dihydroxyisovalerate) into 2-oxo-3-methylbutanoate (2-oxoisovalerate), the penultimate precursor to L-isoleucine and L-valine, respectively.</text>
</comment>
<comment type="catalytic activity">
    <reaction evidence="1">
        <text>(2R)-2,3-dihydroxy-3-methylbutanoate = 3-methyl-2-oxobutanoate + H2O</text>
        <dbReference type="Rhea" id="RHEA:24809"/>
        <dbReference type="ChEBI" id="CHEBI:11851"/>
        <dbReference type="ChEBI" id="CHEBI:15377"/>
        <dbReference type="ChEBI" id="CHEBI:49072"/>
        <dbReference type="EC" id="4.2.1.9"/>
    </reaction>
    <physiologicalReaction direction="left-to-right" evidence="1">
        <dbReference type="Rhea" id="RHEA:24810"/>
    </physiologicalReaction>
</comment>
<comment type="catalytic activity">
    <reaction evidence="1">
        <text>(2R,3R)-2,3-dihydroxy-3-methylpentanoate = (S)-3-methyl-2-oxopentanoate + H2O</text>
        <dbReference type="Rhea" id="RHEA:27694"/>
        <dbReference type="ChEBI" id="CHEBI:15377"/>
        <dbReference type="ChEBI" id="CHEBI:35146"/>
        <dbReference type="ChEBI" id="CHEBI:49258"/>
        <dbReference type="EC" id="4.2.1.9"/>
    </reaction>
    <physiologicalReaction direction="left-to-right" evidence="1">
        <dbReference type="Rhea" id="RHEA:27695"/>
    </physiologicalReaction>
</comment>
<comment type="cofactor">
    <cofactor evidence="1">
        <name>[2Fe-2S] cluster</name>
        <dbReference type="ChEBI" id="CHEBI:190135"/>
    </cofactor>
    <text evidence="1">Binds 1 [2Fe-2S] cluster per subunit. This cluster acts as a Lewis acid cofactor.</text>
</comment>
<comment type="cofactor">
    <cofactor evidence="1">
        <name>Mg(2+)</name>
        <dbReference type="ChEBI" id="CHEBI:18420"/>
    </cofactor>
</comment>
<comment type="pathway">
    <text evidence="1">Amino-acid biosynthesis; L-isoleucine biosynthesis; L-isoleucine from 2-oxobutanoate: step 3/4.</text>
</comment>
<comment type="pathway">
    <text evidence="1">Amino-acid biosynthesis; L-valine biosynthesis; L-valine from pyruvate: step 3/4.</text>
</comment>
<comment type="subunit">
    <text evidence="1">Homodimer.</text>
</comment>
<comment type="similarity">
    <text evidence="1">Belongs to the IlvD/Edd family.</text>
</comment>
<proteinExistence type="inferred from homology"/>
<accession>Q12IN9</accession>
<gene>
    <name evidence="1" type="primary">ilvD</name>
    <name type="ordered locus">Sden_3412</name>
</gene>
<protein>
    <recommendedName>
        <fullName evidence="1">Dihydroxy-acid dehydratase</fullName>
        <shortName evidence="1">DAD</shortName>
        <ecNumber evidence="1">4.2.1.9</ecNumber>
    </recommendedName>
</protein>
<reference key="1">
    <citation type="submission" date="2006-03" db="EMBL/GenBank/DDBJ databases">
        <title>Complete sequence of Shewanella denitrificans OS217.</title>
        <authorList>
            <consortium name="US DOE Joint Genome Institute"/>
            <person name="Copeland A."/>
            <person name="Lucas S."/>
            <person name="Lapidus A."/>
            <person name="Barry K."/>
            <person name="Detter J.C."/>
            <person name="Glavina del Rio T."/>
            <person name="Hammon N."/>
            <person name="Israni S."/>
            <person name="Dalin E."/>
            <person name="Tice H."/>
            <person name="Pitluck S."/>
            <person name="Brettin T."/>
            <person name="Bruce D."/>
            <person name="Han C."/>
            <person name="Tapia R."/>
            <person name="Gilna P."/>
            <person name="Kiss H."/>
            <person name="Schmutz J."/>
            <person name="Larimer F."/>
            <person name="Land M."/>
            <person name="Hauser L."/>
            <person name="Kyrpides N."/>
            <person name="Lykidis A."/>
            <person name="Richardson P."/>
        </authorList>
    </citation>
    <scope>NUCLEOTIDE SEQUENCE [LARGE SCALE GENOMIC DNA]</scope>
    <source>
        <strain>OS217 / ATCC BAA-1090 / DSM 15013</strain>
    </source>
</reference>
<evidence type="ECO:0000255" key="1">
    <source>
        <dbReference type="HAMAP-Rule" id="MF_00012"/>
    </source>
</evidence>
<sequence length="619" mass="65746">MPKLRSATSTEGRNMAGARALWRATGMKDNDFGKPIIAIANSYTQFVPGHVHLKDMGDLVASAIAEAGGISKEFNTIAVDDGIAMGHGGMLYSLPSRELIADSVEYMVNAHCADALVCISNCDKITPGMLMAALRLNIPVVFVSGGPMEAGKTKLSDKIIKLDLVDAMVAAADSSVSEEDSAKIERSACPTCGSCSGMFTANSMNCLTEALGLSLPGNGSMLATHSDRRELFLEAGRRVMALTKRYYHDDDETALPRNIASFKAFENATALDIAMGGSSNTVLHLLAAAQEAEVDFTMADIDRISRKVPHLCKVAPSTPKYHMEDVHRAGGVMSILGELDRADLLHTDVPHVAADSGENLSHVLARYDLVQTQDENVRRFFSAGPAGIPTTKAFSQSCRWPSVDDDRQNGCIRSREFAFSQEGGLAVLSGNIAPKGCIVKTAGVDEDNLTFVGRARVYESQDDAVAGILGGEVVAGDVVVIRYEGPKGGPGMQEMLYPTSYLKSRGLGAQCALITDGRFSGGTSGLSIGHVSPEAASGGAIALIEQGDEIVIDIPARTIVLNVSDSELEARRQAMDAKGVLGWKPLNRQRYVSLALKAYALLATSADMGAVRDRTLLEG</sequence>
<name>ILVD_SHEDO</name>